<protein>
    <recommendedName>
        <fullName evidence="1">33 kDa chaperonin</fullName>
    </recommendedName>
    <alternativeName>
        <fullName evidence="1">Heat shock protein 33 homolog</fullName>
        <shortName evidence="1">HSP33</shortName>
    </alternativeName>
</protein>
<feature type="chain" id="PRO_1000202998" description="33 kDa chaperonin">
    <location>
        <begin position="1"/>
        <end position="295"/>
    </location>
</feature>
<feature type="disulfide bond" description="Redox-active" evidence="1">
    <location>
        <begin position="237"/>
        <end position="239"/>
    </location>
</feature>
<feature type="disulfide bond" description="Redox-active" evidence="1">
    <location>
        <begin position="270"/>
        <end position="273"/>
    </location>
</feature>
<keyword id="KW-0143">Chaperone</keyword>
<keyword id="KW-0963">Cytoplasm</keyword>
<keyword id="KW-1015">Disulfide bond</keyword>
<keyword id="KW-0676">Redox-active center</keyword>
<keyword id="KW-0862">Zinc</keyword>
<proteinExistence type="inferred from homology"/>
<name>HSLO_GEOSW</name>
<accession>C5D392</accession>
<dbReference type="EMBL" id="CP001638">
    <property type="protein sequence ID" value="ACS23008.1"/>
    <property type="molecule type" value="Genomic_DNA"/>
</dbReference>
<dbReference type="SMR" id="C5D392"/>
<dbReference type="STRING" id="471223.GWCH70_0066"/>
<dbReference type="KEGG" id="gwc:GWCH70_0066"/>
<dbReference type="eggNOG" id="COG1281">
    <property type="taxonomic scope" value="Bacteria"/>
</dbReference>
<dbReference type="HOGENOM" id="CLU_054493_1_0_9"/>
<dbReference type="OrthoDB" id="9776534at2"/>
<dbReference type="GO" id="GO:0005737">
    <property type="term" value="C:cytoplasm"/>
    <property type="evidence" value="ECO:0007669"/>
    <property type="project" value="UniProtKB-SubCell"/>
</dbReference>
<dbReference type="GO" id="GO:0044183">
    <property type="term" value="F:protein folding chaperone"/>
    <property type="evidence" value="ECO:0007669"/>
    <property type="project" value="TreeGrafter"/>
</dbReference>
<dbReference type="GO" id="GO:0051082">
    <property type="term" value="F:unfolded protein binding"/>
    <property type="evidence" value="ECO:0007669"/>
    <property type="project" value="UniProtKB-UniRule"/>
</dbReference>
<dbReference type="GO" id="GO:0042026">
    <property type="term" value="P:protein refolding"/>
    <property type="evidence" value="ECO:0007669"/>
    <property type="project" value="TreeGrafter"/>
</dbReference>
<dbReference type="CDD" id="cd00498">
    <property type="entry name" value="Hsp33"/>
    <property type="match status" value="1"/>
</dbReference>
<dbReference type="Gene3D" id="3.55.30.10">
    <property type="entry name" value="Hsp33 domain"/>
    <property type="match status" value="1"/>
</dbReference>
<dbReference type="Gene3D" id="3.90.1280.10">
    <property type="entry name" value="HSP33 redox switch-like"/>
    <property type="match status" value="1"/>
</dbReference>
<dbReference type="HAMAP" id="MF_00117">
    <property type="entry name" value="HslO"/>
    <property type="match status" value="1"/>
</dbReference>
<dbReference type="InterPro" id="IPR000397">
    <property type="entry name" value="Heat_shock_Hsp33"/>
</dbReference>
<dbReference type="InterPro" id="IPR016154">
    <property type="entry name" value="Heat_shock_Hsp33_C"/>
</dbReference>
<dbReference type="InterPro" id="IPR016153">
    <property type="entry name" value="Heat_shock_Hsp33_N"/>
</dbReference>
<dbReference type="NCBIfam" id="NF001033">
    <property type="entry name" value="PRK00114.1"/>
    <property type="match status" value="1"/>
</dbReference>
<dbReference type="PANTHER" id="PTHR30111">
    <property type="entry name" value="33 KDA CHAPERONIN"/>
    <property type="match status" value="1"/>
</dbReference>
<dbReference type="PANTHER" id="PTHR30111:SF1">
    <property type="entry name" value="33 KDA CHAPERONIN"/>
    <property type="match status" value="1"/>
</dbReference>
<dbReference type="Pfam" id="PF01430">
    <property type="entry name" value="HSP33"/>
    <property type="match status" value="1"/>
</dbReference>
<dbReference type="PIRSF" id="PIRSF005261">
    <property type="entry name" value="Heat_shock_Hsp33"/>
    <property type="match status" value="1"/>
</dbReference>
<dbReference type="SUPFAM" id="SSF64397">
    <property type="entry name" value="Hsp33 domain"/>
    <property type="match status" value="1"/>
</dbReference>
<dbReference type="SUPFAM" id="SSF118352">
    <property type="entry name" value="HSP33 redox switch-like"/>
    <property type="match status" value="1"/>
</dbReference>
<evidence type="ECO:0000255" key="1">
    <source>
        <dbReference type="HAMAP-Rule" id="MF_00117"/>
    </source>
</evidence>
<gene>
    <name evidence="1" type="primary">hslO</name>
    <name type="ordered locus">GWCH70_0066</name>
</gene>
<sequence length="295" mass="32061">MSDYLVKALAYDGQVRAYAARTTDTVSEAQRRHQTWPTASAALGRAITAGVMMGAMLKGDDKLTIKIDGGGPIGTILVDSNAKGEVRGYVTNPHVHFDLNEHGKLDVAKAVGKNGMLTVVKDLGLRDFFTGQVPIISGELGEDFTYYFASSEQVPSSVGVGVLVNPDNTILAAGGFIIQLMPGTEEKTIEQIEQRLQTIPPVSKMVESGLTPEEILEELLGKGNVKVLETLPVSFVCRCSRERIADAIISLGPQEIQDIMEKEGYAEASCHFCNETYHFTKEELEQLKQLAEAKN</sequence>
<reference key="1">
    <citation type="submission" date="2009-06" db="EMBL/GenBank/DDBJ databases">
        <title>Complete sequence of chromosome of Geopacillus sp. WCH70.</title>
        <authorList>
            <consortium name="US DOE Joint Genome Institute"/>
            <person name="Lucas S."/>
            <person name="Copeland A."/>
            <person name="Lapidus A."/>
            <person name="Glavina del Rio T."/>
            <person name="Dalin E."/>
            <person name="Tice H."/>
            <person name="Bruce D."/>
            <person name="Goodwin L."/>
            <person name="Pitluck S."/>
            <person name="Chertkov O."/>
            <person name="Brettin T."/>
            <person name="Detter J.C."/>
            <person name="Han C."/>
            <person name="Larimer F."/>
            <person name="Land M."/>
            <person name="Hauser L."/>
            <person name="Kyrpides N."/>
            <person name="Mikhailova N."/>
            <person name="Brumm P."/>
            <person name="Mead D.A."/>
            <person name="Richardson P."/>
        </authorList>
    </citation>
    <scope>NUCLEOTIDE SEQUENCE [LARGE SCALE GENOMIC DNA]</scope>
    <source>
        <strain>WCH70</strain>
    </source>
</reference>
<comment type="function">
    <text evidence="1">Redox regulated molecular chaperone. Protects both thermally unfolding and oxidatively damaged proteins from irreversible aggregation. Plays an important role in the bacterial defense system toward oxidative stress.</text>
</comment>
<comment type="subcellular location">
    <subcellularLocation>
        <location evidence="1">Cytoplasm</location>
    </subcellularLocation>
</comment>
<comment type="PTM">
    <text evidence="1">Under oxidizing conditions two disulfide bonds are formed involving the reactive cysteines. Under reducing conditions zinc is bound to the reactive cysteines and the protein is inactive.</text>
</comment>
<comment type="similarity">
    <text evidence="1">Belongs to the HSP33 family.</text>
</comment>
<organism>
    <name type="scientific">Geobacillus sp. (strain WCH70)</name>
    <dbReference type="NCBI Taxonomy" id="471223"/>
    <lineage>
        <taxon>Bacteria</taxon>
        <taxon>Bacillati</taxon>
        <taxon>Bacillota</taxon>
        <taxon>Bacilli</taxon>
        <taxon>Bacillales</taxon>
        <taxon>Anoxybacillaceae</taxon>
        <taxon>Geobacillus</taxon>
    </lineage>
</organism>